<organism>
    <name type="scientific">Burkholderia pseudomallei (strain 668)</name>
    <dbReference type="NCBI Taxonomy" id="320373"/>
    <lineage>
        <taxon>Bacteria</taxon>
        <taxon>Pseudomonadati</taxon>
        <taxon>Pseudomonadota</taxon>
        <taxon>Betaproteobacteria</taxon>
        <taxon>Burkholderiales</taxon>
        <taxon>Burkholderiaceae</taxon>
        <taxon>Burkholderia</taxon>
        <taxon>pseudomallei group</taxon>
    </lineage>
</organism>
<protein>
    <recommendedName>
        <fullName evidence="1">tRNA-cytidine(32) 2-sulfurtransferase</fullName>
        <ecNumber evidence="1">2.8.1.-</ecNumber>
    </recommendedName>
    <alternativeName>
        <fullName evidence="1">Two-thiocytidine biosynthesis protein A</fullName>
    </alternativeName>
    <alternativeName>
        <fullName evidence="1">tRNA 2-thiocytidine biosynthesis protein TtcA</fullName>
    </alternativeName>
</protein>
<sequence length="331" mass="36719">MNAPHTPHLNEAEAAAAVEANAAELGRRALTRREQKEAYENNKLFKRLVRQVGQAIGDYNMIEHGDKVMVCLSGGKDSYALLDILLRLRERAPIDFDIVAVNLDQKQPGFPEHVLPEYLTKIGVPFHIENQDTYSIVKRLVPEGKTTCSLCSRLRRGILYRVAGELGATKIALGHHRDDIVQTLLLNMFYGGKLKGMPPKLQSDDGKNIVIRPLAYAKETDLEKYAELREFPIIPCNLCGSQPNLKRAEMKALIRDWDKRFPGRVDNMFNALANVVPSHLMDARLFPFAGLRATGEADPNGDIAFDEDPCGTDASAPGGAKSVSIVQFDDL</sequence>
<evidence type="ECO:0000255" key="1">
    <source>
        <dbReference type="HAMAP-Rule" id="MF_01850"/>
    </source>
</evidence>
<comment type="function">
    <text evidence="1">Catalyzes the ATP-dependent 2-thiolation of cytidine in position 32 of tRNA, to form 2-thiocytidine (s(2)C32). The sulfur atoms are provided by the cysteine/cysteine desulfurase (IscS) system.</text>
</comment>
<comment type="catalytic activity">
    <reaction evidence="1">
        <text>cytidine(32) in tRNA + S-sulfanyl-L-cysteinyl-[cysteine desulfurase] + AH2 + ATP = 2-thiocytidine(32) in tRNA + L-cysteinyl-[cysteine desulfurase] + A + AMP + diphosphate + H(+)</text>
        <dbReference type="Rhea" id="RHEA:57048"/>
        <dbReference type="Rhea" id="RHEA-COMP:10288"/>
        <dbReference type="Rhea" id="RHEA-COMP:12157"/>
        <dbReference type="Rhea" id="RHEA-COMP:12158"/>
        <dbReference type="Rhea" id="RHEA-COMP:14821"/>
        <dbReference type="ChEBI" id="CHEBI:13193"/>
        <dbReference type="ChEBI" id="CHEBI:15378"/>
        <dbReference type="ChEBI" id="CHEBI:17499"/>
        <dbReference type="ChEBI" id="CHEBI:29950"/>
        <dbReference type="ChEBI" id="CHEBI:30616"/>
        <dbReference type="ChEBI" id="CHEBI:33019"/>
        <dbReference type="ChEBI" id="CHEBI:61963"/>
        <dbReference type="ChEBI" id="CHEBI:82748"/>
        <dbReference type="ChEBI" id="CHEBI:141453"/>
        <dbReference type="ChEBI" id="CHEBI:456215"/>
    </reaction>
    <physiologicalReaction direction="left-to-right" evidence="1">
        <dbReference type="Rhea" id="RHEA:57049"/>
    </physiologicalReaction>
</comment>
<comment type="cofactor">
    <cofactor evidence="1">
        <name>Mg(2+)</name>
        <dbReference type="ChEBI" id="CHEBI:18420"/>
    </cofactor>
</comment>
<comment type="cofactor">
    <cofactor evidence="1">
        <name>[4Fe-4S] cluster</name>
        <dbReference type="ChEBI" id="CHEBI:49883"/>
    </cofactor>
    <text evidence="1">Binds 1 [4Fe-4S] cluster per subunit. The cluster is chelated by three Cys residues, the fourth Fe has a free coordination site that may bind a sulfur atom transferred from the persulfide of IscS.</text>
</comment>
<comment type="pathway">
    <text evidence="1">tRNA modification.</text>
</comment>
<comment type="subunit">
    <text evidence="1">Homodimer.</text>
</comment>
<comment type="subcellular location">
    <subcellularLocation>
        <location evidence="1">Cytoplasm</location>
    </subcellularLocation>
</comment>
<comment type="miscellaneous">
    <text evidence="1">The thiolation reaction likely consists of two steps: a first activation step by ATP to form an adenylated intermediate of the target base of tRNA, and a second nucleophilic substitution step of the sulfur (S) atom supplied by the hydrosulfide attached to the Fe-S cluster.</text>
</comment>
<comment type="similarity">
    <text evidence="1">Belongs to the TtcA family.</text>
</comment>
<name>TTCA_BURP6</name>
<accession>A3N4V9</accession>
<keyword id="KW-0004">4Fe-4S</keyword>
<keyword id="KW-0067">ATP-binding</keyword>
<keyword id="KW-0963">Cytoplasm</keyword>
<keyword id="KW-0408">Iron</keyword>
<keyword id="KW-0411">Iron-sulfur</keyword>
<keyword id="KW-0460">Magnesium</keyword>
<keyword id="KW-0479">Metal-binding</keyword>
<keyword id="KW-0547">Nucleotide-binding</keyword>
<keyword id="KW-0694">RNA-binding</keyword>
<keyword id="KW-0808">Transferase</keyword>
<keyword id="KW-0819">tRNA processing</keyword>
<keyword id="KW-0820">tRNA-binding</keyword>
<feature type="chain" id="PRO_0000348694" description="tRNA-cytidine(32) 2-sulfurtransferase">
    <location>
        <begin position="1"/>
        <end position="331"/>
    </location>
</feature>
<feature type="short sequence motif" description="PP-loop motif" evidence="1">
    <location>
        <begin position="73"/>
        <end position="78"/>
    </location>
</feature>
<feature type="binding site" evidence="1">
    <location>
        <position position="148"/>
    </location>
    <ligand>
        <name>[4Fe-4S] cluster</name>
        <dbReference type="ChEBI" id="CHEBI:49883"/>
    </ligand>
</feature>
<feature type="binding site" evidence="1">
    <location>
        <position position="151"/>
    </location>
    <ligand>
        <name>[4Fe-4S] cluster</name>
        <dbReference type="ChEBI" id="CHEBI:49883"/>
    </ligand>
</feature>
<feature type="binding site" evidence="1">
    <location>
        <position position="239"/>
    </location>
    <ligand>
        <name>[4Fe-4S] cluster</name>
        <dbReference type="ChEBI" id="CHEBI:49883"/>
    </ligand>
</feature>
<reference key="1">
    <citation type="journal article" date="2010" name="Genome Biol. Evol.">
        <title>Continuing evolution of Burkholderia mallei through genome reduction and large-scale rearrangements.</title>
        <authorList>
            <person name="Losada L."/>
            <person name="Ronning C.M."/>
            <person name="DeShazer D."/>
            <person name="Woods D."/>
            <person name="Fedorova N."/>
            <person name="Kim H.S."/>
            <person name="Shabalina S.A."/>
            <person name="Pearson T.R."/>
            <person name="Brinkac L."/>
            <person name="Tan P."/>
            <person name="Nandi T."/>
            <person name="Crabtree J."/>
            <person name="Badger J."/>
            <person name="Beckstrom-Sternberg S."/>
            <person name="Saqib M."/>
            <person name="Schutzer S.E."/>
            <person name="Keim P."/>
            <person name="Nierman W.C."/>
        </authorList>
    </citation>
    <scope>NUCLEOTIDE SEQUENCE [LARGE SCALE GENOMIC DNA]</scope>
    <source>
        <strain>668</strain>
    </source>
</reference>
<dbReference type="EC" id="2.8.1.-" evidence="1"/>
<dbReference type="EMBL" id="CP000570">
    <property type="protein sequence ID" value="ABN84801.1"/>
    <property type="molecule type" value="Genomic_DNA"/>
</dbReference>
<dbReference type="RefSeq" id="WP_004189298.1">
    <property type="nucleotide sequence ID" value="NC_009074.1"/>
</dbReference>
<dbReference type="SMR" id="A3N4V9"/>
<dbReference type="GeneID" id="93058831"/>
<dbReference type="KEGG" id="bpd:BURPS668_0327"/>
<dbReference type="HOGENOM" id="CLU_026481_0_0_4"/>
<dbReference type="GO" id="GO:0005737">
    <property type="term" value="C:cytoplasm"/>
    <property type="evidence" value="ECO:0007669"/>
    <property type="project" value="UniProtKB-SubCell"/>
</dbReference>
<dbReference type="GO" id="GO:0051539">
    <property type="term" value="F:4 iron, 4 sulfur cluster binding"/>
    <property type="evidence" value="ECO:0007669"/>
    <property type="project" value="UniProtKB-UniRule"/>
</dbReference>
<dbReference type="GO" id="GO:0005524">
    <property type="term" value="F:ATP binding"/>
    <property type="evidence" value="ECO:0007669"/>
    <property type="project" value="UniProtKB-UniRule"/>
</dbReference>
<dbReference type="GO" id="GO:0000287">
    <property type="term" value="F:magnesium ion binding"/>
    <property type="evidence" value="ECO:0007669"/>
    <property type="project" value="UniProtKB-UniRule"/>
</dbReference>
<dbReference type="GO" id="GO:0016783">
    <property type="term" value="F:sulfurtransferase activity"/>
    <property type="evidence" value="ECO:0007669"/>
    <property type="project" value="UniProtKB-UniRule"/>
</dbReference>
<dbReference type="GO" id="GO:0000049">
    <property type="term" value="F:tRNA binding"/>
    <property type="evidence" value="ECO:0007669"/>
    <property type="project" value="UniProtKB-KW"/>
</dbReference>
<dbReference type="GO" id="GO:0034227">
    <property type="term" value="P:tRNA thio-modification"/>
    <property type="evidence" value="ECO:0007669"/>
    <property type="project" value="UniProtKB-UniRule"/>
</dbReference>
<dbReference type="CDD" id="cd24138">
    <property type="entry name" value="TtcA-like"/>
    <property type="match status" value="1"/>
</dbReference>
<dbReference type="Gene3D" id="3.40.50.620">
    <property type="entry name" value="HUPs"/>
    <property type="match status" value="1"/>
</dbReference>
<dbReference type="HAMAP" id="MF_01850">
    <property type="entry name" value="TtcA"/>
    <property type="match status" value="1"/>
</dbReference>
<dbReference type="InterPro" id="IPR014729">
    <property type="entry name" value="Rossmann-like_a/b/a_fold"/>
</dbReference>
<dbReference type="InterPro" id="IPR011063">
    <property type="entry name" value="TilS/TtcA_N"/>
</dbReference>
<dbReference type="InterPro" id="IPR012089">
    <property type="entry name" value="tRNA_Cyd_32_2_STrfase"/>
</dbReference>
<dbReference type="NCBIfam" id="NF007972">
    <property type="entry name" value="PRK10696.1"/>
    <property type="match status" value="1"/>
</dbReference>
<dbReference type="PANTHER" id="PTHR43686:SF1">
    <property type="entry name" value="AMINOTRAN_5 DOMAIN-CONTAINING PROTEIN"/>
    <property type="match status" value="1"/>
</dbReference>
<dbReference type="PANTHER" id="PTHR43686">
    <property type="entry name" value="SULFURTRANSFERASE-RELATED"/>
    <property type="match status" value="1"/>
</dbReference>
<dbReference type="Pfam" id="PF01171">
    <property type="entry name" value="ATP_bind_3"/>
    <property type="match status" value="1"/>
</dbReference>
<dbReference type="SUPFAM" id="SSF52402">
    <property type="entry name" value="Adenine nucleotide alpha hydrolases-like"/>
    <property type="match status" value="1"/>
</dbReference>
<gene>
    <name evidence="1" type="primary">ttcA</name>
    <name type="ordered locus">BURPS668_0327</name>
</gene>
<proteinExistence type="inferred from homology"/>